<evidence type="ECO:0000250" key="1"/>
<evidence type="ECO:0000255" key="2"/>
<evidence type="ECO:0000305" key="3"/>
<reference key="1">
    <citation type="journal article" date="2008" name="PLoS Genet.">
        <title>Genomic islands in the pathogenic filamentous fungus Aspergillus fumigatus.</title>
        <authorList>
            <person name="Fedorova N.D."/>
            <person name="Khaldi N."/>
            <person name="Joardar V.S."/>
            <person name="Maiti R."/>
            <person name="Amedeo P."/>
            <person name="Anderson M.J."/>
            <person name="Crabtree J."/>
            <person name="Silva J.C."/>
            <person name="Badger J.H."/>
            <person name="Albarraq A."/>
            <person name="Angiuoli S."/>
            <person name="Bussey H."/>
            <person name="Bowyer P."/>
            <person name="Cotty P.J."/>
            <person name="Dyer P.S."/>
            <person name="Egan A."/>
            <person name="Galens K."/>
            <person name="Fraser-Liggett C.M."/>
            <person name="Haas B.J."/>
            <person name="Inman J.M."/>
            <person name="Kent R."/>
            <person name="Lemieux S."/>
            <person name="Malavazi I."/>
            <person name="Orvis J."/>
            <person name="Roemer T."/>
            <person name="Ronning C.M."/>
            <person name="Sundaram J.P."/>
            <person name="Sutton G."/>
            <person name="Turner G."/>
            <person name="Venter J.C."/>
            <person name="White O.R."/>
            <person name="Whitty B.R."/>
            <person name="Youngman P."/>
            <person name="Wolfe K.H."/>
            <person name="Goldman G.H."/>
            <person name="Wortman J.R."/>
            <person name="Jiang B."/>
            <person name="Denning D.W."/>
            <person name="Nierman W.C."/>
        </authorList>
    </citation>
    <scope>NUCLEOTIDE SEQUENCE [LARGE SCALE GENOMIC DNA]</scope>
    <source>
        <strain>ATCC 1007 / CBS 513.65 / DSM 816 / NCTC 3887 / NRRL 1 / QM 1276 / 107</strain>
    </source>
</reference>
<dbReference type="EC" id="3.2.1.25"/>
<dbReference type="EMBL" id="DS027060">
    <property type="protein sequence ID" value="EAW06662.1"/>
    <property type="molecule type" value="Genomic_DNA"/>
</dbReference>
<dbReference type="RefSeq" id="XP_001268088.1">
    <property type="nucleotide sequence ID" value="XM_001268087.1"/>
</dbReference>
<dbReference type="SMR" id="A1CTM5"/>
<dbReference type="STRING" id="344612.A1CTM5"/>
<dbReference type="GlyCosmos" id="A1CTM5">
    <property type="glycosylation" value="12 sites, No reported glycans"/>
</dbReference>
<dbReference type="EnsemblFungi" id="EAW06662">
    <property type="protein sequence ID" value="EAW06662"/>
    <property type="gene ID" value="ACLA_083570"/>
</dbReference>
<dbReference type="GeneID" id="4700372"/>
<dbReference type="KEGG" id="act:ACLA_083570"/>
<dbReference type="VEuPathDB" id="FungiDB:ACLA_083570"/>
<dbReference type="eggNOG" id="KOG2230">
    <property type="taxonomic scope" value="Eukaryota"/>
</dbReference>
<dbReference type="HOGENOM" id="CLU_005015_3_0_1"/>
<dbReference type="OMA" id="PWKPAYI"/>
<dbReference type="OrthoDB" id="2866996at2759"/>
<dbReference type="UniPathway" id="UPA00280"/>
<dbReference type="Proteomes" id="UP000006701">
    <property type="component" value="Unassembled WGS sequence"/>
</dbReference>
<dbReference type="GO" id="GO:0005576">
    <property type="term" value="C:extracellular region"/>
    <property type="evidence" value="ECO:0007669"/>
    <property type="project" value="UniProtKB-SubCell"/>
</dbReference>
<dbReference type="GO" id="GO:0004567">
    <property type="term" value="F:beta-mannosidase activity"/>
    <property type="evidence" value="ECO:0007669"/>
    <property type="project" value="UniProtKB-EC"/>
</dbReference>
<dbReference type="GO" id="GO:0006516">
    <property type="term" value="P:glycoprotein catabolic process"/>
    <property type="evidence" value="ECO:0007669"/>
    <property type="project" value="TreeGrafter"/>
</dbReference>
<dbReference type="GO" id="GO:0000272">
    <property type="term" value="P:polysaccharide catabolic process"/>
    <property type="evidence" value="ECO:0007669"/>
    <property type="project" value="UniProtKB-KW"/>
</dbReference>
<dbReference type="FunFam" id="2.60.40.10:FF:001511">
    <property type="entry name" value="Beta-mannosidase A"/>
    <property type="match status" value="1"/>
</dbReference>
<dbReference type="FunFam" id="2.60.40.10:FF:002310">
    <property type="entry name" value="Beta-mannosidase A"/>
    <property type="match status" value="1"/>
</dbReference>
<dbReference type="FunFam" id="3.20.20.80:FF:000084">
    <property type="entry name" value="Beta-mannosidase A"/>
    <property type="match status" value="1"/>
</dbReference>
<dbReference type="Gene3D" id="2.60.120.260">
    <property type="entry name" value="Galactose-binding domain-like"/>
    <property type="match status" value="1"/>
</dbReference>
<dbReference type="Gene3D" id="3.20.20.80">
    <property type="entry name" value="Glycosidases"/>
    <property type="match status" value="1"/>
</dbReference>
<dbReference type="Gene3D" id="2.60.40.10">
    <property type="entry name" value="Immunoglobulins"/>
    <property type="match status" value="3"/>
</dbReference>
<dbReference type="InterPro" id="IPR036156">
    <property type="entry name" value="Beta-gal/glucu_dom_sf"/>
</dbReference>
<dbReference type="InterPro" id="IPR054593">
    <property type="entry name" value="Beta-mannosidase-like_N2"/>
</dbReference>
<dbReference type="InterPro" id="IPR050887">
    <property type="entry name" value="Beta-mannosidase_GH2"/>
</dbReference>
<dbReference type="InterPro" id="IPR041625">
    <property type="entry name" value="Beta-mannosidase_Ig"/>
</dbReference>
<dbReference type="InterPro" id="IPR008979">
    <property type="entry name" value="Galactose-bd-like_sf"/>
</dbReference>
<dbReference type="InterPro" id="IPR006102">
    <property type="entry name" value="Glyco_hydro_2_Ig-like"/>
</dbReference>
<dbReference type="InterPro" id="IPR017853">
    <property type="entry name" value="Glycoside_hydrolase_SF"/>
</dbReference>
<dbReference type="InterPro" id="IPR013783">
    <property type="entry name" value="Ig-like_fold"/>
</dbReference>
<dbReference type="InterPro" id="IPR041447">
    <property type="entry name" value="Mannosidase_ig"/>
</dbReference>
<dbReference type="PANTHER" id="PTHR43730">
    <property type="entry name" value="BETA-MANNOSIDASE"/>
    <property type="match status" value="1"/>
</dbReference>
<dbReference type="PANTHER" id="PTHR43730:SF5">
    <property type="entry name" value="BETA-MANNOSIDASE A"/>
    <property type="match status" value="1"/>
</dbReference>
<dbReference type="Pfam" id="PF00703">
    <property type="entry name" value="Glyco_hydro_2"/>
    <property type="match status" value="1"/>
</dbReference>
<dbReference type="Pfam" id="PF22666">
    <property type="entry name" value="Glyco_hydro_2_N2"/>
    <property type="match status" value="1"/>
</dbReference>
<dbReference type="Pfam" id="PF17753">
    <property type="entry name" value="Ig_mannosidase"/>
    <property type="match status" value="1"/>
</dbReference>
<dbReference type="Pfam" id="PF17786">
    <property type="entry name" value="Mannosidase_ig"/>
    <property type="match status" value="1"/>
</dbReference>
<dbReference type="SUPFAM" id="SSF51445">
    <property type="entry name" value="(Trans)glycosidases"/>
    <property type="match status" value="1"/>
</dbReference>
<dbReference type="SUPFAM" id="SSF49303">
    <property type="entry name" value="beta-Galactosidase/glucuronidase domain"/>
    <property type="match status" value="1"/>
</dbReference>
<dbReference type="SUPFAM" id="SSF49785">
    <property type="entry name" value="Galactose-binding domain-like"/>
    <property type="match status" value="1"/>
</dbReference>
<organism>
    <name type="scientific">Aspergillus clavatus (strain ATCC 1007 / CBS 513.65 / DSM 816 / NCTC 3887 / NRRL 1 / QM 1276 / 107)</name>
    <dbReference type="NCBI Taxonomy" id="344612"/>
    <lineage>
        <taxon>Eukaryota</taxon>
        <taxon>Fungi</taxon>
        <taxon>Dikarya</taxon>
        <taxon>Ascomycota</taxon>
        <taxon>Pezizomycotina</taxon>
        <taxon>Eurotiomycetes</taxon>
        <taxon>Eurotiomycetidae</taxon>
        <taxon>Eurotiales</taxon>
        <taxon>Aspergillaceae</taxon>
        <taxon>Aspergillus</taxon>
        <taxon>Aspergillus subgen. Fumigati</taxon>
    </lineage>
</organism>
<comment type="function">
    <text evidence="1">Exoglycosidase that cleaves the single beta-linked mannose residue from the non-reducing end of beta-mannosidic oligosaccharides of various complexity and length. Involved in the degradation of polymeric mannan and galactomannan (By similarity).</text>
</comment>
<comment type="catalytic activity">
    <reaction>
        <text>Hydrolysis of terminal, non-reducing beta-D-mannose residues in beta-D-mannosides.</text>
        <dbReference type="EC" id="3.2.1.25"/>
    </reaction>
</comment>
<comment type="pathway">
    <text>Glycan metabolism; N-glycan degradation.</text>
</comment>
<comment type="subunit">
    <text evidence="1">Homodimer.</text>
</comment>
<comment type="subcellular location">
    <subcellularLocation>
        <location evidence="1">Secreted</location>
    </subcellularLocation>
</comment>
<comment type="similarity">
    <text evidence="3">Belongs to the glycosyl hydrolase 2 family. Beta-mannosidase A subfamily.</text>
</comment>
<protein>
    <recommendedName>
        <fullName>Beta-mannosidase A</fullName>
        <ecNumber>3.2.1.25</ecNumber>
    </recommendedName>
    <alternativeName>
        <fullName>Mannanase A</fullName>
        <shortName>Mannase A</shortName>
    </alternativeName>
</protein>
<keyword id="KW-0119">Carbohydrate metabolism</keyword>
<keyword id="KW-0325">Glycoprotein</keyword>
<keyword id="KW-0326">Glycosidase</keyword>
<keyword id="KW-0378">Hydrolase</keyword>
<keyword id="KW-0624">Polysaccharide degradation</keyword>
<keyword id="KW-1185">Reference proteome</keyword>
<keyword id="KW-0964">Secreted</keyword>
<keyword id="KW-0732">Signal</keyword>
<gene>
    <name type="primary">mndA</name>
    <name type="ORF">ACLA_083570</name>
</gene>
<proteinExistence type="inferred from homology"/>
<sequence length="932" mass="104680">MRIREQTILALLSPGLPPVTGQHVLDLSEPGWTVSSKALNRTVPGRLPSQVHLDLFEAGVIATMGSMILTFAGLRMPTGRTPATLLLGCELTDHESTWLVFDGLDTFTTITFCDQIIGSTYNQFRQYHFDVSQVLKECKQEGPVLSINFGSAPNIANAIANGPSAEEWPAGVQITNEYPNRWYIRKEQSDFGWDWGPAFAPAGPWKPAYIVQNKNPDRLYVLNTDLDIYRRGQINHLPPDQSQSWVVNASIDVLGSVPQWPSMSVEIKDAYSGVVLSSGLLENVTVSGNSVTGVTVVDGRTPKLWWPNGMGDQSLYNVTIAVHNHRNQVVAEVMKRTGFRTIFLNQRNITEEQLAQGVAPGANWHFEINGREFYAKGSNIIPPDAFWPRVTPSRMERLFDAVTAGNQNMLRVWASGAYLHDFIYDLADEKGILLWSEFQFSDALYPVDDAFLENVAAEVVYNVRRVNHHPSLALWAGGNEIESLMLPMVRRADHKGYAKYVGEYEKLYISLILPLVYENTRSITYSPSSTTEGYLHVNLSAPVPMTERYSNTTPGSYYGDTDYYNYDTSVSFNYHKYPVGRFANEFGFHSMPSLQTWQQAVDPKDLYFNSSVVVLRNHHYTAGGLFTDNYQNSSRGMGEMTMGVESYYPIPSKSDPVANFSAWCHATQLFQADMYKAQIQFYRRGSGMPERQLGSLYWQLEDTWQAPTWAGIEYDGRWKMLHYVARDIYEPIIVSPFWNYTTGDLEVYVTSDLWEPAQGTVNLTWVDLSGKSIAGNAGTPESIPFSVGALNATDVYSANVADLSPPDLTDSILILSLAGEGYLPNARTRSEFRHENQFTPVFPKDLALRDPKLELAYNPDTRTFTVEATAGVSLYTWLDYPAGVVGYFEQNGFVLLPGMKKEIGFVVQEGSVDEDWMRSVTVTSLWDQKVRE</sequence>
<accession>A1CTM5</accession>
<feature type="signal peptide" evidence="2">
    <location>
        <begin position="1"/>
        <end position="21"/>
    </location>
</feature>
<feature type="chain" id="PRO_0000394643" description="Beta-mannosidase A">
    <location>
        <begin position="22"/>
        <end position="932"/>
    </location>
</feature>
<feature type="active site" description="Proton donor" evidence="1">
    <location>
        <position position="480"/>
    </location>
</feature>
<feature type="glycosylation site" description="N-linked (GlcNAc...) asparagine" evidence="2">
    <location>
        <position position="40"/>
    </location>
</feature>
<feature type="glycosylation site" description="N-linked (GlcNAc...) asparagine" evidence="2">
    <location>
        <position position="248"/>
    </location>
</feature>
<feature type="glycosylation site" description="N-linked (GlcNAc...) asparagine" evidence="2">
    <location>
        <position position="283"/>
    </location>
</feature>
<feature type="glycosylation site" description="N-linked (GlcNAc...) asparagine" evidence="2">
    <location>
        <position position="317"/>
    </location>
</feature>
<feature type="glycosylation site" description="N-linked (GlcNAc...) asparagine" evidence="2">
    <location>
        <position position="348"/>
    </location>
</feature>
<feature type="glycosylation site" description="N-linked (GlcNAc...) asparagine" evidence="2">
    <location>
        <position position="538"/>
    </location>
</feature>
<feature type="glycosylation site" description="N-linked (GlcNAc...) asparagine" evidence="2">
    <location>
        <position position="609"/>
    </location>
</feature>
<feature type="glycosylation site" description="N-linked (GlcNAc...) asparagine" evidence="2">
    <location>
        <position position="632"/>
    </location>
</feature>
<feature type="glycosylation site" description="N-linked (GlcNAc...) asparagine" evidence="2">
    <location>
        <position position="659"/>
    </location>
</feature>
<feature type="glycosylation site" description="N-linked (GlcNAc...) asparagine" evidence="2">
    <location>
        <position position="739"/>
    </location>
</feature>
<feature type="glycosylation site" description="N-linked (GlcNAc...) asparagine" evidence="2">
    <location>
        <position position="762"/>
    </location>
</feature>
<feature type="glycosylation site" description="N-linked (GlcNAc...) asparagine" evidence="2">
    <location>
        <position position="791"/>
    </location>
</feature>
<name>MANBA_ASPCL</name>